<protein>
    <recommendedName>
        <fullName evidence="7">ABC-type transmembrane transporter verA</fullName>
    </recommendedName>
    <alternativeName>
        <fullName evidence="7">Verticillin biosynthesis cluster protein A</fullName>
    </alternativeName>
</protein>
<accession>A0A1U9YI12</accession>
<gene>
    <name evidence="7" type="primary">verA</name>
</gene>
<proteinExistence type="evidence at transcript level"/>
<organism>
    <name type="scientific">Clonostachys rogersoniana</name>
    <dbReference type="NCBI Taxonomy" id="122658"/>
    <lineage>
        <taxon>Eukaryota</taxon>
        <taxon>Fungi</taxon>
        <taxon>Dikarya</taxon>
        <taxon>Ascomycota</taxon>
        <taxon>Pezizomycotina</taxon>
        <taxon>Sordariomycetes</taxon>
        <taxon>Hypocreomycetidae</taxon>
        <taxon>Hypocreales</taxon>
        <taxon>Bionectriaceae</taxon>
        <taxon>Clonostachys</taxon>
    </lineage>
</organism>
<comment type="function">
    <text evidence="5 9">ABC-type transmembrane transporter; part of the gene cluster that mediates the biosynthesis of 11'-deoxyverticillin A, one of the dimeric epipolythiodioxopiperazines (ETPs) from the verticillin family that are toxic secondary metabolites (PubMed:28376389). The verA multidrug transporter is probably involved in the secretion of 11'-deoxyverticillin A (Probable).</text>
</comment>
<comment type="subcellular location">
    <subcellularLocation>
        <location evidence="8">Cell membrane</location>
        <topology evidence="1">Multi-pass membrane protein</topology>
    </subcellularLocation>
</comment>
<comment type="induction">
    <text evidence="6">Expression is regulated by the cluster-specific regulator verZ.</text>
</comment>
<comment type="disruption phenotype">
    <text evidence="5">Dicreases the production of 11'-deoxyverticillin A.</text>
</comment>
<comment type="similarity">
    <text evidence="8">Belongs to the ABC transporter superfamily. ABCB family. Multidrug resistance exporter (TC 3.A.1.201) subfamily.</text>
</comment>
<name>VERA_CLORO</name>
<sequence length="1261" mass="138053">MPIDAESEAELRSEAEAPPGGFGKLMRVFTFATAVDRLIQIGCAFAAVCSGAAMPLMALILGRLTANFTDYGSSGDDKSTAEFMKSVQTNALWFVYLFIGKFTLVYLWSFGFTFTASRMLQAMRLTCLDRILDRTVAANDEETPGSLSNTVTSQCNSIQAALSDRLGIMIQAFSMLLASFAVAFSQSWQLTLVMLGLVIITLGLIGFIVSSDQKIEAGLLKRYAECSIIAEDALGSIRTVIAFGAAHKFLAKYNEILKKTETDGKKKGPFVGLMFACQYFFMFVGWAIGFYLGAYLFTKGMISDPGRILSVFFAMLIGLGAIMALGPNMPSFIKAIAAADVAFKILDDGTDQNQDSESQKDASQPEKIACQGHVELRDMSFAYRGREDRNALDKINLSFERGTSTAIVGPSGAGKSTLISLLERWYEPTAGSIFLDGNDIFQLDPKWLRSQIALVQQEPQLFNASIFDNIAYGLIGTEQENLSPEDKQTLVHDACRHARAYEFITKLPESFDTMVGDRASLISGGQKQRIAIARALVARRPILLMDEATSALDNENSKVIEALMTNSIDRTTIFISHKIRAATKADRVVVLDHGKVSEQGTHEELLSAGGLYKRLYDAQTEVESSDDEDPIKTITKTPIPTVVEKTEEASGGPQASIAEPSDNLPQIPKRNLLANLWEIAKEQRRYWPIFLIGLVACVVTAQIFPVQAILLGRVMQVFQGPPEKVSSDANFWSLMFFVVGLGAMISYAILGFFMTLLGVYLTRFYRLEYFRAVLQQPVEFFDRVASGTLLSRLSSDPSNLHELISINMGLLISIFVSVISASIIGLAYSWKFALVAIFAAMPAVFAAGYLRMKLDSSLAEEMEKISEESARFVSDSLSAFRTVKAFTMETAVHHMYNECLVSFAGRLYRQRAVMTLFFAFSESVELLASALGFWYGGKLMGDGELSTEKFFTVFIAVVVGGQAAGALFGFSSNLGKAKIAANNILGIRSQVRAAAARDQSRQMAEENHSEKTENTVVDMQNVTFAYPARPNVPVLKGISFKVYRGQTVGVVGTSGSGKSTLLALLERFYEAQSGTVNVLGRPISAHDIDEYRKRLAIVPQEPQLYNGTVRDNVILGLDEDKVQEADVATACEAAGLGEFISSLPDGFNTQCRGQGVSFSGGQKQRVAIARALIMHPELLLLDEPTSALDAESEQLVRETLGNIQEGRTMILVTHRLNIVRNAHVIIVMDGGRIVEQGTHTELMAKQGNYFKMHESSNGGEA</sequence>
<evidence type="ECO:0000255" key="1"/>
<evidence type="ECO:0000255" key="2">
    <source>
        <dbReference type="PROSITE-ProRule" id="PRU00434"/>
    </source>
</evidence>
<evidence type="ECO:0000255" key="3">
    <source>
        <dbReference type="PROSITE-ProRule" id="PRU00441"/>
    </source>
</evidence>
<evidence type="ECO:0000255" key="4">
    <source>
        <dbReference type="PROSITE-ProRule" id="PRU00498"/>
    </source>
</evidence>
<evidence type="ECO:0000269" key="5">
    <source>
    </source>
</evidence>
<evidence type="ECO:0000269" key="6">
    <source>
    </source>
</evidence>
<evidence type="ECO:0000303" key="7">
    <source>
    </source>
</evidence>
<evidence type="ECO:0000305" key="8"/>
<evidence type="ECO:0000305" key="9">
    <source>
    </source>
</evidence>
<reference key="1">
    <citation type="journal article" date="2017" name="Fungal Genet. Biol.">
        <title>Identification and characterization of the verticillin biosynthetic gene cluster in Clonostachys rogersoniana.</title>
        <authorList>
            <person name="Wang Y."/>
            <person name="Hu P."/>
            <person name="Pan Y."/>
            <person name="Zhu Y."/>
            <person name="Liu X."/>
            <person name="Che Y."/>
            <person name="Liu G."/>
        </authorList>
    </citation>
    <scope>NUCLEOTIDE SEQUENCE [GENOMIC DNA]</scope>
    <scope>FUNCTION</scope>
    <scope>DISRUPTION PHENOTYPE</scope>
    <scope>PATHWAY</scope>
    <source>
        <strain>XZC04-CC-302</strain>
    </source>
</reference>
<reference key="2">
    <citation type="journal article" date="2017" name="Microbiology">
        <title>VerZ, a Zn(II)2Cys6 DNA-binding protein, regulates the biosynthesis of verticillin in Clonostachys rogersoniana.</title>
        <authorList>
            <person name="Guo Z."/>
            <person name="Hao T."/>
            <person name="Wang Y."/>
            <person name="Pan Y."/>
            <person name="Ren F."/>
            <person name="Liu X."/>
            <person name="Che Y."/>
            <person name="Liu G."/>
        </authorList>
    </citation>
    <scope>INDUCTION</scope>
</reference>
<feature type="chain" id="PRO_0000450159" description="ABC-type transmembrane transporter verA">
    <location>
        <begin position="1"/>
        <end position="1261"/>
    </location>
</feature>
<feature type="transmembrane region" description="Helical" evidence="3">
    <location>
        <begin position="41"/>
        <end position="61"/>
    </location>
</feature>
<feature type="transmembrane region" description="Helical" evidence="3">
    <location>
        <begin position="92"/>
        <end position="112"/>
    </location>
</feature>
<feature type="transmembrane region" description="Helical" evidence="3">
    <location>
        <begin position="166"/>
        <end position="186"/>
    </location>
</feature>
<feature type="transmembrane region" description="Helical" evidence="3">
    <location>
        <begin position="190"/>
        <end position="210"/>
    </location>
</feature>
<feature type="transmembrane region" description="Helical" evidence="3">
    <location>
        <begin position="270"/>
        <end position="290"/>
    </location>
</feature>
<feature type="transmembrane region" description="Helical" evidence="3">
    <location>
        <begin position="308"/>
        <end position="328"/>
    </location>
</feature>
<feature type="transmembrane region" description="Helical" evidence="3">
    <location>
        <begin position="686"/>
        <end position="706"/>
    </location>
</feature>
<feature type="transmembrane region" description="Helical" evidence="3">
    <location>
        <begin position="734"/>
        <end position="754"/>
    </location>
</feature>
<feature type="transmembrane region" description="Helical" evidence="3">
    <location>
        <begin position="808"/>
        <end position="828"/>
    </location>
</feature>
<feature type="transmembrane region" description="Helical" evidence="3">
    <location>
        <begin position="830"/>
        <end position="850"/>
    </location>
</feature>
<feature type="transmembrane region" description="Helical" evidence="3">
    <location>
        <begin position="913"/>
        <end position="933"/>
    </location>
</feature>
<feature type="transmembrane region" description="Helical" evidence="3">
    <location>
        <begin position="950"/>
        <end position="970"/>
    </location>
</feature>
<feature type="domain" description="ABC transmembrane type-1 1" evidence="3">
    <location>
        <begin position="41"/>
        <end position="334"/>
    </location>
</feature>
<feature type="domain" description="ABC transporter 1" evidence="2">
    <location>
        <begin position="374"/>
        <end position="618"/>
    </location>
</feature>
<feature type="domain" description="ABC transmembrane type-1 2" evidence="3">
    <location>
        <begin position="691"/>
        <end position="976"/>
    </location>
</feature>
<feature type="domain" description="ABC transporter 2" evidence="2">
    <location>
        <begin position="1017"/>
        <end position="1255"/>
    </location>
</feature>
<feature type="binding site" evidence="2">
    <location>
        <begin position="409"/>
        <end position="416"/>
    </location>
    <ligand>
        <name>ATP</name>
        <dbReference type="ChEBI" id="CHEBI:30616"/>
    </ligand>
</feature>
<feature type="binding site" evidence="2">
    <location>
        <begin position="1052"/>
        <end position="1059"/>
    </location>
    <ligand>
        <name>ATP</name>
        <dbReference type="ChEBI" id="CHEBI:30616"/>
    </ligand>
</feature>
<feature type="glycosylation site" description="N-linked (GlcNAc...) asparagine" evidence="4">
    <location>
        <position position="67"/>
    </location>
</feature>
<feature type="glycosylation site" description="N-linked (GlcNAc...) asparagine" evidence="4">
    <location>
        <position position="396"/>
    </location>
</feature>
<feature type="glycosylation site" description="N-linked (GlcNAc...) asparagine" evidence="4">
    <location>
        <position position="463"/>
    </location>
</feature>
<feature type="glycosylation site" description="N-linked (GlcNAc...) asparagine" evidence="4">
    <location>
        <position position="1007"/>
    </location>
</feature>
<feature type="glycosylation site" description="N-linked (GlcNAc...) asparagine" evidence="4">
    <location>
        <position position="1021"/>
    </location>
</feature>
<feature type="glycosylation site" description="N-linked (GlcNAc...) asparagine" evidence="4">
    <location>
        <position position="1106"/>
    </location>
</feature>
<keyword id="KW-0067">ATP-binding</keyword>
<keyword id="KW-1003">Cell membrane</keyword>
<keyword id="KW-0325">Glycoprotein</keyword>
<keyword id="KW-0472">Membrane</keyword>
<keyword id="KW-0547">Nucleotide-binding</keyword>
<keyword id="KW-0677">Repeat</keyword>
<keyword id="KW-0812">Transmembrane</keyword>
<keyword id="KW-1133">Transmembrane helix</keyword>
<keyword id="KW-0813">Transport</keyword>
<dbReference type="EMBL" id="KY359203">
    <property type="protein sequence ID" value="AQZ42156.1"/>
    <property type="molecule type" value="Genomic_DNA"/>
</dbReference>
<dbReference type="SMR" id="A0A1U9YI12"/>
<dbReference type="GlyCosmos" id="A0A1U9YI12">
    <property type="glycosylation" value="6 sites, No reported glycans"/>
</dbReference>
<dbReference type="GO" id="GO:0005743">
    <property type="term" value="C:mitochondrial inner membrane"/>
    <property type="evidence" value="ECO:0007669"/>
    <property type="project" value="TreeGrafter"/>
</dbReference>
<dbReference type="GO" id="GO:0005886">
    <property type="term" value="C:plasma membrane"/>
    <property type="evidence" value="ECO:0007669"/>
    <property type="project" value="UniProtKB-SubCell"/>
</dbReference>
<dbReference type="GO" id="GO:0015421">
    <property type="term" value="F:ABC-type oligopeptide transporter activity"/>
    <property type="evidence" value="ECO:0007669"/>
    <property type="project" value="TreeGrafter"/>
</dbReference>
<dbReference type="GO" id="GO:0005524">
    <property type="term" value="F:ATP binding"/>
    <property type="evidence" value="ECO:0007669"/>
    <property type="project" value="UniProtKB-KW"/>
</dbReference>
<dbReference type="GO" id="GO:0016887">
    <property type="term" value="F:ATP hydrolysis activity"/>
    <property type="evidence" value="ECO:0007669"/>
    <property type="project" value="InterPro"/>
</dbReference>
<dbReference type="GO" id="GO:0090374">
    <property type="term" value="P:oligopeptide export from mitochondrion"/>
    <property type="evidence" value="ECO:0007669"/>
    <property type="project" value="TreeGrafter"/>
</dbReference>
<dbReference type="CDD" id="cd18577">
    <property type="entry name" value="ABC_6TM_Pgp_ABCB1_D1_like"/>
    <property type="match status" value="1"/>
</dbReference>
<dbReference type="CDD" id="cd18578">
    <property type="entry name" value="ABC_6TM_Pgp_ABCB1_D2_like"/>
    <property type="match status" value="1"/>
</dbReference>
<dbReference type="FunFam" id="3.40.50.300:FF:000967">
    <property type="entry name" value="ABC multidrug transporter mdr4"/>
    <property type="match status" value="1"/>
</dbReference>
<dbReference type="FunFam" id="3.40.50.300:FF:000913">
    <property type="entry name" value="ABC multidrug transporter SitT"/>
    <property type="match status" value="1"/>
</dbReference>
<dbReference type="Gene3D" id="1.20.1560.10">
    <property type="entry name" value="ABC transporter type 1, transmembrane domain"/>
    <property type="match status" value="2"/>
</dbReference>
<dbReference type="Gene3D" id="3.40.50.300">
    <property type="entry name" value="P-loop containing nucleotide triphosphate hydrolases"/>
    <property type="match status" value="2"/>
</dbReference>
<dbReference type="InterPro" id="IPR003593">
    <property type="entry name" value="AAA+_ATPase"/>
</dbReference>
<dbReference type="InterPro" id="IPR011527">
    <property type="entry name" value="ABC1_TM_dom"/>
</dbReference>
<dbReference type="InterPro" id="IPR036640">
    <property type="entry name" value="ABC1_TM_sf"/>
</dbReference>
<dbReference type="InterPro" id="IPR003439">
    <property type="entry name" value="ABC_transporter-like_ATP-bd"/>
</dbReference>
<dbReference type="InterPro" id="IPR017871">
    <property type="entry name" value="ABC_transporter-like_CS"/>
</dbReference>
<dbReference type="InterPro" id="IPR027417">
    <property type="entry name" value="P-loop_NTPase"/>
</dbReference>
<dbReference type="InterPro" id="IPR039421">
    <property type="entry name" value="Type_1_exporter"/>
</dbReference>
<dbReference type="PANTHER" id="PTHR43394:SF11">
    <property type="entry name" value="ATP-BINDING CASSETTE TRANSPORTER"/>
    <property type="match status" value="1"/>
</dbReference>
<dbReference type="PANTHER" id="PTHR43394">
    <property type="entry name" value="ATP-DEPENDENT PERMEASE MDL1, MITOCHONDRIAL"/>
    <property type="match status" value="1"/>
</dbReference>
<dbReference type="Pfam" id="PF00664">
    <property type="entry name" value="ABC_membrane"/>
    <property type="match status" value="2"/>
</dbReference>
<dbReference type="Pfam" id="PF00005">
    <property type="entry name" value="ABC_tran"/>
    <property type="match status" value="2"/>
</dbReference>
<dbReference type="SMART" id="SM00382">
    <property type="entry name" value="AAA"/>
    <property type="match status" value="2"/>
</dbReference>
<dbReference type="SUPFAM" id="SSF90123">
    <property type="entry name" value="ABC transporter transmembrane region"/>
    <property type="match status" value="2"/>
</dbReference>
<dbReference type="SUPFAM" id="SSF52540">
    <property type="entry name" value="P-loop containing nucleoside triphosphate hydrolases"/>
    <property type="match status" value="2"/>
</dbReference>
<dbReference type="PROSITE" id="PS50929">
    <property type="entry name" value="ABC_TM1F"/>
    <property type="match status" value="2"/>
</dbReference>
<dbReference type="PROSITE" id="PS00211">
    <property type="entry name" value="ABC_TRANSPORTER_1"/>
    <property type="match status" value="2"/>
</dbReference>
<dbReference type="PROSITE" id="PS50893">
    <property type="entry name" value="ABC_TRANSPORTER_2"/>
    <property type="match status" value="2"/>
</dbReference>